<sequence length="199" mass="21967">MSFYAAPIARLIEEFEKLPGIGHKTAQRLAFYVLDMPQEKVDRLANAITEAKQKTKFCSVCGNLTDTDVCPLCSSEKRDSSVICVVEDPRDVVAMEKIREFKGLYHVLHGAISPMQGIGPEDIKIKELLDRIKEGNVKEVIIATNPNIEGEATAMYISKLIKPLGVKTTRIAHGIPVGGDLEYADEVTLAKALEGRREI</sequence>
<reference key="1">
    <citation type="submission" date="2007-02" db="EMBL/GenBank/DDBJ databases">
        <title>Complete sequence of Clostridium thermocellum ATCC 27405.</title>
        <authorList>
            <consortium name="US DOE Joint Genome Institute"/>
            <person name="Copeland A."/>
            <person name="Lucas S."/>
            <person name="Lapidus A."/>
            <person name="Barry K."/>
            <person name="Detter J.C."/>
            <person name="Glavina del Rio T."/>
            <person name="Hammon N."/>
            <person name="Israni S."/>
            <person name="Dalin E."/>
            <person name="Tice H."/>
            <person name="Pitluck S."/>
            <person name="Chertkov O."/>
            <person name="Brettin T."/>
            <person name="Bruce D."/>
            <person name="Han C."/>
            <person name="Tapia R."/>
            <person name="Gilna P."/>
            <person name="Schmutz J."/>
            <person name="Larimer F."/>
            <person name="Land M."/>
            <person name="Hauser L."/>
            <person name="Kyrpides N."/>
            <person name="Mikhailova N."/>
            <person name="Wu J.H.D."/>
            <person name="Newcomb M."/>
            <person name="Richardson P."/>
        </authorList>
    </citation>
    <scope>NUCLEOTIDE SEQUENCE [LARGE SCALE GENOMIC DNA]</scope>
    <source>
        <strain>ATCC 27405 / DSM 1237 / JCM 9322 / NBRC 103400 / NCIMB 10682 / NRRL B-4536 / VPI 7372</strain>
    </source>
</reference>
<dbReference type="EMBL" id="CP000568">
    <property type="protein sequence ID" value="ABN53346.1"/>
    <property type="molecule type" value="Genomic_DNA"/>
</dbReference>
<dbReference type="RefSeq" id="WP_003514291.1">
    <property type="nucleotide sequence ID" value="NC_009012.1"/>
</dbReference>
<dbReference type="SMR" id="A3DHB7"/>
<dbReference type="STRING" id="203119.Cthe_2142"/>
<dbReference type="GeneID" id="35803155"/>
<dbReference type="KEGG" id="cth:Cthe_2142"/>
<dbReference type="eggNOG" id="COG0353">
    <property type="taxonomic scope" value="Bacteria"/>
</dbReference>
<dbReference type="HOGENOM" id="CLU_060739_1_0_9"/>
<dbReference type="OrthoDB" id="9802672at2"/>
<dbReference type="Proteomes" id="UP000002145">
    <property type="component" value="Chromosome"/>
</dbReference>
<dbReference type="GO" id="GO:0003677">
    <property type="term" value="F:DNA binding"/>
    <property type="evidence" value="ECO:0007669"/>
    <property type="project" value="UniProtKB-UniRule"/>
</dbReference>
<dbReference type="GO" id="GO:0008270">
    <property type="term" value="F:zinc ion binding"/>
    <property type="evidence" value="ECO:0007669"/>
    <property type="project" value="UniProtKB-KW"/>
</dbReference>
<dbReference type="GO" id="GO:0006310">
    <property type="term" value="P:DNA recombination"/>
    <property type="evidence" value="ECO:0007669"/>
    <property type="project" value="UniProtKB-UniRule"/>
</dbReference>
<dbReference type="GO" id="GO:0006281">
    <property type="term" value="P:DNA repair"/>
    <property type="evidence" value="ECO:0007669"/>
    <property type="project" value="UniProtKB-UniRule"/>
</dbReference>
<dbReference type="CDD" id="cd01025">
    <property type="entry name" value="TOPRIM_recR"/>
    <property type="match status" value="1"/>
</dbReference>
<dbReference type="Gene3D" id="3.30.60.80">
    <property type="match status" value="1"/>
</dbReference>
<dbReference type="Gene3D" id="3.40.1360.10">
    <property type="match status" value="1"/>
</dbReference>
<dbReference type="Gene3D" id="6.10.250.240">
    <property type="match status" value="1"/>
</dbReference>
<dbReference type="Gene3D" id="1.10.8.420">
    <property type="entry name" value="RecR Domain 1"/>
    <property type="match status" value="1"/>
</dbReference>
<dbReference type="HAMAP" id="MF_00017">
    <property type="entry name" value="RecR"/>
    <property type="match status" value="1"/>
</dbReference>
<dbReference type="InterPro" id="IPR000093">
    <property type="entry name" value="DNA_Rcmb_RecR"/>
</dbReference>
<dbReference type="InterPro" id="IPR023627">
    <property type="entry name" value="Rcmb_RecR"/>
</dbReference>
<dbReference type="InterPro" id="IPR015967">
    <property type="entry name" value="Rcmb_RecR_Znf"/>
</dbReference>
<dbReference type="InterPro" id="IPR006171">
    <property type="entry name" value="TOPRIM_dom"/>
</dbReference>
<dbReference type="InterPro" id="IPR034137">
    <property type="entry name" value="TOPRIM_RecR"/>
</dbReference>
<dbReference type="NCBIfam" id="TIGR00615">
    <property type="entry name" value="recR"/>
    <property type="match status" value="1"/>
</dbReference>
<dbReference type="PANTHER" id="PTHR30446">
    <property type="entry name" value="RECOMBINATION PROTEIN RECR"/>
    <property type="match status" value="1"/>
</dbReference>
<dbReference type="PANTHER" id="PTHR30446:SF0">
    <property type="entry name" value="RECOMBINATION PROTEIN RECR"/>
    <property type="match status" value="1"/>
</dbReference>
<dbReference type="Pfam" id="PF21175">
    <property type="entry name" value="RecR_C"/>
    <property type="match status" value="1"/>
</dbReference>
<dbReference type="Pfam" id="PF21176">
    <property type="entry name" value="RecR_HhH"/>
    <property type="match status" value="1"/>
</dbReference>
<dbReference type="Pfam" id="PF02132">
    <property type="entry name" value="RecR_ZnF"/>
    <property type="match status" value="1"/>
</dbReference>
<dbReference type="Pfam" id="PF13662">
    <property type="entry name" value="Toprim_4"/>
    <property type="match status" value="1"/>
</dbReference>
<dbReference type="SMART" id="SM00493">
    <property type="entry name" value="TOPRIM"/>
    <property type="match status" value="1"/>
</dbReference>
<dbReference type="SUPFAM" id="SSF111304">
    <property type="entry name" value="Recombination protein RecR"/>
    <property type="match status" value="1"/>
</dbReference>
<dbReference type="PROSITE" id="PS01300">
    <property type="entry name" value="RECR"/>
    <property type="match status" value="1"/>
</dbReference>
<dbReference type="PROSITE" id="PS50880">
    <property type="entry name" value="TOPRIM"/>
    <property type="match status" value="1"/>
</dbReference>
<keyword id="KW-0227">DNA damage</keyword>
<keyword id="KW-0233">DNA recombination</keyword>
<keyword id="KW-0234">DNA repair</keyword>
<keyword id="KW-0479">Metal-binding</keyword>
<keyword id="KW-1185">Reference proteome</keyword>
<keyword id="KW-0862">Zinc</keyword>
<keyword id="KW-0863">Zinc-finger</keyword>
<proteinExistence type="inferred from homology"/>
<protein>
    <recommendedName>
        <fullName evidence="1">Recombination protein RecR</fullName>
    </recommendedName>
</protein>
<comment type="function">
    <text evidence="1">May play a role in DNA repair. It seems to be involved in an RecBC-independent recombinational process of DNA repair. It may act with RecF and RecO.</text>
</comment>
<comment type="similarity">
    <text evidence="1">Belongs to the RecR family.</text>
</comment>
<name>RECR_ACET2</name>
<accession>A3DHB7</accession>
<evidence type="ECO:0000255" key="1">
    <source>
        <dbReference type="HAMAP-Rule" id="MF_00017"/>
    </source>
</evidence>
<feature type="chain" id="PRO_0000322879" description="Recombination protein RecR">
    <location>
        <begin position="1"/>
        <end position="199"/>
    </location>
</feature>
<feature type="domain" description="Toprim" evidence="1">
    <location>
        <begin position="81"/>
        <end position="176"/>
    </location>
</feature>
<feature type="zinc finger region" description="C4-type" evidence="1">
    <location>
        <begin position="58"/>
        <end position="73"/>
    </location>
</feature>
<organism>
    <name type="scientific">Acetivibrio thermocellus (strain ATCC 27405 / DSM 1237 / JCM 9322 / NBRC 103400 / NCIMB 10682 / NRRL B-4536 / VPI 7372)</name>
    <name type="common">Clostridium thermocellum</name>
    <dbReference type="NCBI Taxonomy" id="203119"/>
    <lineage>
        <taxon>Bacteria</taxon>
        <taxon>Bacillati</taxon>
        <taxon>Bacillota</taxon>
        <taxon>Clostridia</taxon>
        <taxon>Eubacteriales</taxon>
        <taxon>Oscillospiraceae</taxon>
        <taxon>Acetivibrio</taxon>
    </lineage>
</organism>
<gene>
    <name evidence="1" type="primary">recR</name>
    <name type="ordered locus">Cthe_2142</name>
</gene>